<name>ATPD_RHDSA</name>
<dbReference type="EMBL" id="EF508371">
    <property type="protein sequence ID" value="ABO70820.1"/>
    <property type="molecule type" value="Genomic_DNA"/>
</dbReference>
<dbReference type="RefSeq" id="YP_001293544.1">
    <property type="nucleotide sequence ID" value="NC_009573.1"/>
</dbReference>
<dbReference type="SMR" id="A6MVW5"/>
<dbReference type="GeneID" id="5228685"/>
<dbReference type="GO" id="GO:0009535">
    <property type="term" value="C:chloroplast thylakoid membrane"/>
    <property type="evidence" value="ECO:0007669"/>
    <property type="project" value="UniProtKB-SubCell"/>
</dbReference>
<dbReference type="GO" id="GO:0045259">
    <property type="term" value="C:proton-transporting ATP synthase complex"/>
    <property type="evidence" value="ECO:0007669"/>
    <property type="project" value="UniProtKB-KW"/>
</dbReference>
<dbReference type="GO" id="GO:0046933">
    <property type="term" value="F:proton-transporting ATP synthase activity, rotational mechanism"/>
    <property type="evidence" value="ECO:0007669"/>
    <property type="project" value="UniProtKB-UniRule"/>
</dbReference>
<dbReference type="Gene3D" id="1.10.520.20">
    <property type="entry name" value="N-terminal domain of the delta subunit of the F1F0-ATP synthase"/>
    <property type="match status" value="1"/>
</dbReference>
<dbReference type="HAMAP" id="MF_01416">
    <property type="entry name" value="ATP_synth_delta_bact"/>
    <property type="match status" value="1"/>
</dbReference>
<dbReference type="InterPro" id="IPR026015">
    <property type="entry name" value="ATP_synth_OSCP/delta_N_sf"/>
</dbReference>
<dbReference type="InterPro" id="IPR020781">
    <property type="entry name" value="ATPase_OSCP/d_CS"/>
</dbReference>
<dbReference type="InterPro" id="IPR000711">
    <property type="entry name" value="ATPase_OSCP/dsu"/>
</dbReference>
<dbReference type="NCBIfam" id="TIGR01145">
    <property type="entry name" value="ATP_synt_delta"/>
    <property type="match status" value="1"/>
</dbReference>
<dbReference type="PANTHER" id="PTHR11910">
    <property type="entry name" value="ATP SYNTHASE DELTA CHAIN"/>
    <property type="match status" value="1"/>
</dbReference>
<dbReference type="Pfam" id="PF00213">
    <property type="entry name" value="OSCP"/>
    <property type="match status" value="1"/>
</dbReference>
<dbReference type="PRINTS" id="PR00125">
    <property type="entry name" value="ATPASEDELTA"/>
</dbReference>
<dbReference type="SUPFAM" id="SSF47928">
    <property type="entry name" value="N-terminal domain of the delta subunit of the F1F0-ATP synthase"/>
    <property type="match status" value="1"/>
</dbReference>
<dbReference type="PROSITE" id="PS00389">
    <property type="entry name" value="ATPASE_DELTA"/>
    <property type="match status" value="1"/>
</dbReference>
<accession>A6MVW5</accession>
<comment type="function">
    <text evidence="1">F(1)F(0) ATP synthase produces ATP from ADP in the presence of a proton or sodium gradient. F-type ATPases consist of two structural domains, F(1) containing the extramembraneous catalytic core and F(0) containing the membrane proton channel, linked together by a central stalk and a peripheral stalk. During catalysis, ATP synthesis in the catalytic domain of F(1) is coupled via a rotary mechanism of the central stalk subunits to proton translocation.</text>
</comment>
<comment type="function">
    <text evidence="1">This protein is part of the stalk that links CF(0) to CF(1). It either transmits conformational changes from CF(0) to CF(1) or is implicated in proton conduction.</text>
</comment>
<comment type="subunit">
    <text evidence="1">F-type ATPases have 2 components, F(1) - the catalytic core - and F(0) - the membrane proton channel. F(1) has five subunits: alpha(3), beta(3), gamma(1), delta(1), epsilon(1). CF(0) has four main subunits: a(1), b(1), b'(1) and c(10-14). The alpha and beta chains form an alternating ring which encloses part of the gamma chain. F(1) is attached to F(0) by a central stalk formed by the gamma and epsilon chains, while a peripheral stalk is formed by the delta, b and b' chains.</text>
</comment>
<comment type="subcellular location">
    <subcellularLocation>
        <location evidence="1">Plastid</location>
        <location evidence="1">Chloroplast thylakoid membrane</location>
        <topology evidence="1">Peripheral membrane protein</topology>
    </subcellularLocation>
</comment>
<comment type="similarity">
    <text evidence="1">Belongs to the ATPase delta chain family.</text>
</comment>
<protein>
    <recommendedName>
        <fullName evidence="1">ATP synthase subunit delta, chloroplastic</fullName>
    </recommendedName>
    <alternativeName>
        <fullName evidence="1">ATP synthase F(1) sector subunit delta</fullName>
    </alternativeName>
    <alternativeName>
        <fullName evidence="1">F-type ATPase subunit delta</fullName>
    </alternativeName>
</protein>
<organism>
    <name type="scientific">Rhodomonas salina</name>
    <name type="common">Cryptomonas salina</name>
    <dbReference type="NCBI Taxonomy" id="52970"/>
    <lineage>
        <taxon>Eukaryota</taxon>
        <taxon>Cryptophyceae</taxon>
        <taxon>Pyrenomonadales</taxon>
        <taxon>Pyrenomonadaceae</taxon>
        <taxon>Rhodomonas</taxon>
    </lineage>
</organism>
<geneLocation type="chloroplast"/>
<reference key="1">
    <citation type="journal article" date="2007" name="Mol. Biol. Evol.">
        <title>Plastid genome sequence of the cryptophyte alga Rhodomonas salina CCMP1319: lateral transfer of putative DNA replication machinery and a test of chromist plastid phylogeny.</title>
        <authorList>
            <person name="Khan H."/>
            <person name="Parks N."/>
            <person name="Kozera C."/>
            <person name="Curtis B.A."/>
            <person name="Parsons B.J."/>
            <person name="Bowman S."/>
            <person name="Archibald J.M."/>
        </authorList>
    </citation>
    <scope>NUCLEOTIDE SEQUENCE [LARGE SCALE GENOMIC DNA]</scope>
    <source>
        <strain>CCMP1319 / NEPCC76 / CS-174</strain>
    </source>
</reference>
<sequence>MSSKNVKVAKPYADAFIEIANKGSVINDLNCIATALSESKDLQKAIANPLVSSAAKKDIIKSIFAGNVDENTVKFMMVLCDRGRIEYLDAIAETALILAYKQASIEMAYVASSVKLSSAQTEALVDKLKAMTKADQIKLELKVDESLIGGFKVQIGSRIIDTSVQNQLKQLSSYLGASVA</sequence>
<evidence type="ECO:0000255" key="1">
    <source>
        <dbReference type="HAMAP-Rule" id="MF_01416"/>
    </source>
</evidence>
<feature type="chain" id="PRO_0000371211" description="ATP synthase subunit delta, chloroplastic">
    <location>
        <begin position="1"/>
        <end position="180"/>
    </location>
</feature>
<keyword id="KW-0066">ATP synthesis</keyword>
<keyword id="KW-0139">CF(1)</keyword>
<keyword id="KW-0150">Chloroplast</keyword>
<keyword id="KW-0375">Hydrogen ion transport</keyword>
<keyword id="KW-0406">Ion transport</keyword>
<keyword id="KW-0472">Membrane</keyword>
<keyword id="KW-0934">Plastid</keyword>
<keyword id="KW-0793">Thylakoid</keyword>
<keyword id="KW-0813">Transport</keyword>
<proteinExistence type="inferred from homology"/>
<gene>
    <name evidence="1" type="primary">atpD</name>
</gene>